<reference key="1">
    <citation type="journal article" date="2008" name="Toxicon">
        <title>Conantokin-P, an unusual conantokin with a long disulfide loop.</title>
        <authorList>
            <person name="Gowd K.H."/>
            <person name="Twede V."/>
            <person name="Watkins M."/>
            <person name="Krishnan K.S."/>
            <person name="Teichert R.W."/>
            <person name="Bulaj G."/>
            <person name="Olivera B.M."/>
        </authorList>
    </citation>
    <scope>NUCLEOTIDE SEQUENCE [MRNA]</scope>
    <scope>DISULFIDE BOND</scope>
    <scope>GAMMA-CARBOXYGLUTAMATION AT GLU-75; GLU-76; GLU-82; GLU-86 AND GLU-95</scope>
    <source>
        <tissue>Venom duct</tissue>
    </source>
</reference>
<keyword id="KW-0106">Calcium</keyword>
<keyword id="KW-1015">Disulfide bond</keyword>
<keyword id="KW-0301">Gamma-carboxyglutamic acid</keyword>
<keyword id="KW-0872">Ion channel impairing toxin</keyword>
<keyword id="KW-1028">Ionotropic glutamate receptor inhibitor</keyword>
<keyword id="KW-0460">Magnesium</keyword>
<keyword id="KW-0479">Metal-binding</keyword>
<keyword id="KW-0528">Neurotoxin</keyword>
<keyword id="KW-0629">Postsynaptic neurotoxin</keyword>
<keyword id="KW-0964">Secreted</keyword>
<keyword id="KW-0732">Signal</keyword>
<keyword id="KW-0800">Toxin</keyword>
<dbReference type="SMR" id="P0C8D9"/>
<dbReference type="ConoServer" id="3533">
    <property type="toxin name" value="Conantokin-E1 precursor"/>
</dbReference>
<dbReference type="GO" id="GO:0005576">
    <property type="term" value="C:extracellular region"/>
    <property type="evidence" value="ECO:0007669"/>
    <property type="project" value="UniProtKB-SubCell"/>
</dbReference>
<dbReference type="GO" id="GO:0035792">
    <property type="term" value="C:host cell postsynaptic membrane"/>
    <property type="evidence" value="ECO:0007669"/>
    <property type="project" value="UniProtKB-KW"/>
</dbReference>
<dbReference type="GO" id="GO:0099106">
    <property type="term" value="F:ion channel regulator activity"/>
    <property type="evidence" value="ECO:0007669"/>
    <property type="project" value="UniProtKB-KW"/>
</dbReference>
<dbReference type="GO" id="GO:0046872">
    <property type="term" value="F:metal ion binding"/>
    <property type="evidence" value="ECO:0007669"/>
    <property type="project" value="UniProtKB-KW"/>
</dbReference>
<dbReference type="GO" id="GO:0090729">
    <property type="term" value="F:toxin activity"/>
    <property type="evidence" value="ECO:0007669"/>
    <property type="project" value="UniProtKB-KW"/>
</dbReference>
<dbReference type="InterPro" id="IPR005918">
    <property type="entry name" value="Conantokin_CS"/>
</dbReference>
<dbReference type="Pfam" id="PF10550">
    <property type="entry name" value="Toxin_36"/>
    <property type="match status" value="1"/>
</dbReference>
<dbReference type="PROSITE" id="PS60025">
    <property type="entry name" value="CONANTOKIN"/>
    <property type="match status" value="1"/>
</dbReference>
<protein>
    <recommendedName>
        <fullName evidence="6">Conantokin-E</fullName>
        <shortName evidence="6">Con-E</shortName>
    </recommendedName>
</protein>
<accession>P0C8D9</accession>
<evidence type="ECO:0000250" key="1"/>
<evidence type="ECO:0000250" key="2">
    <source>
        <dbReference type="UniProtKB" id="P07231"/>
    </source>
</evidence>
<evidence type="ECO:0000255" key="3"/>
<evidence type="ECO:0000256" key="4">
    <source>
        <dbReference type="SAM" id="MobiDB-lite"/>
    </source>
</evidence>
<evidence type="ECO:0000269" key="5">
    <source>
    </source>
</evidence>
<evidence type="ECO:0000303" key="6">
    <source>
    </source>
</evidence>
<evidence type="ECO:0000305" key="7"/>
<evidence type="ECO:0000305" key="8">
    <source>
    </source>
</evidence>
<sequence>LLVPLVTFHLILGMGTLDHGGALTERRSADATALKPEPVLLQKSDARSTDDNDKDRLTQMKRILKKRGNKARGEEEHSKYQECLREIRVNNVQQEC</sequence>
<organism>
    <name type="scientific">Conus ermineus</name>
    <name type="common">Agate cone</name>
    <name type="synonym">Chelyconus ermineus</name>
    <dbReference type="NCBI Taxonomy" id="55423"/>
    <lineage>
        <taxon>Eukaryota</taxon>
        <taxon>Metazoa</taxon>
        <taxon>Spiralia</taxon>
        <taxon>Lophotrochozoa</taxon>
        <taxon>Mollusca</taxon>
        <taxon>Gastropoda</taxon>
        <taxon>Caenogastropoda</taxon>
        <taxon>Neogastropoda</taxon>
        <taxon>Conoidea</taxon>
        <taxon>Conidae</taxon>
        <taxon>Conus</taxon>
        <taxon>Chelyconus</taxon>
    </lineage>
</organism>
<proteinExistence type="evidence at protein level"/>
<name>CKE_CONER</name>
<feature type="signal peptide" evidence="3">
    <location>
        <begin position="1" status="less than"/>
        <end position="24"/>
    </location>
</feature>
<feature type="propeptide" id="PRO_0000353125" evidence="8">
    <location>
        <begin position="25"/>
        <end position="72"/>
    </location>
</feature>
<feature type="peptide" id="PRO_0000353126" description="Conantokin-E" evidence="8">
    <location>
        <begin position="73"/>
        <end position="96"/>
    </location>
</feature>
<feature type="region of interest" description="Disordered" evidence="4">
    <location>
        <begin position="28"/>
        <end position="57"/>
    </location>
</feature>
<feature type="compositionally biased region" description="Basic and acidic residues" evidence="4">
    <location>
        <begin position="44"/>
        <end position="57"/>
    </location>
</feature>
<feature type="binding site" description="via 4-carboxyglutamate" evidence="2">
    <location>
        <position position="82"/>
    </location>
    <ligand>
        <name>a divalent metal cation</name>
        <dbReference type="ChEBI" id="CHEBI:60240"/>
    </ligand>
</feature>
<feature type="binding site" description="via 4-carboxyglutamate" evidence="2">
    <location>
        <position position="86"/>
    </location>
    <ligand>
        <name>a divalent metal cation</name>
        <dbReference type="ChEBI" id="CHEBI:60240"/>
    </ligand>
</feature>
<feature type="modified residue" description="4-carboxyglutamate" evidence="2 8">
    <location>
        <position position="75"/>
    </location>
</feature>
<feature type="modified residue" description="4-carboxyglutamate" evidence="2 8">
    <location>
        <position position="76"/>
    </location>
</feature>
<feature type="modified residue" description="4-carboxyglutamate" evidence="2 8">
    <location>
        <position position="82"/>
    </location>
</feature>
<feature type="modified residue" description="4-carboxyglutamate" evidence="2 8">
    <location>
        <position position="86"/>
    </location>
</feature>
<feature type="modified residue" description="4-carboxyglutamate" evidence="8">
    <location>
        <position position="95"/>
    </location>
</feature>
<feature type="disulfide bond" evidence="8">
    <location>
        <begin position="83"/>
        <end position="96"/>
    </location>
</feature>
<feature type="non-terminal residue">
    <location>
        <position position="1"/>
    </location>
</feature>
<comment type="function">
    <text evidence="1">Conantokins inhibit N-methyl-D-aspartate (NMDA) receptors. This toxin has the highest potency for the NR2B/GRIN2B subunit, followed by NR2A/GRIN2A, NR2C/GRIN2C, and NR2D/GRIN2D subunits.</text>
</comment>
<comment type="subcellular location">
    <subcellularLocation>
        <location evidence="8">Secreted</location>
    </subcellularLocation>
</comment>
<comment type="tissue specificity">
    <text evidence="8">Expressed by the venom duct.</text>
</comment>
<comment type="domain">
    <text evidence="7">The cysteine framework is C-C.</text>
</comment>
<comment type="miscellaneous">
    <text evidence="5">Adopts an alpha-helical conformation in presence and in absence of divalent cations. Calcium facilitates disulfide bond formation of the synthetic peptide.</text>
</comment>
<comment type="similarity">
    <text evidence="7">Belongs to the conotoxin B superfamily.</text>
</comment>